<keyword id="KW-0548">Nucleotidyltransferase</keyword>
<keyword id="KW-0694">RNA-binding</keyword>
<keyword id="KW-0698">rRNA processing</keyword>
<keyword id="KW-0808">Transferase</keyword>
<keyword id="KW-0819">tRNA processing</keyword>
<keyword id="KW-0820">tRNA-binding</keyword>
<gene>
    <name evidence="1" type="primary">rph</name>
    <name type="ordered locus">CLH_0403</name>
</gene>
<comment type="function">
    <text evidence="1">Phosphorolytic 3'-5' exoribonuclease that plays an important role in tRNA 3'-end maturation. Removes nucleotide residues following the 3'-CCA terminus of tRNAs; can also add nucleotides to the ends of RNA molecules by using nucleoside diphosphates as substrates, but this may not be physiologically important. Probably plays a role in initiation of 16S rRNA degradation (leading to ribosome degradation) during starvation.</text>
</comment>
<comment type="catalytic activity">
    <reaction evidence="1">
        <text>tRNA(n+1) + phosphate = tRNA(n) + a ribonucleoside 5'-diphosphate</text>
        <dbReference type="Rhea" id="RHEA:10628"/>
        <dbReference type="Rhea" id="RHEA-COMP:17343"/>
        <dbReference type="Rhea" id="RHEA-COMP:17344"/>
        <dbReference type="ChEBI" id="CHEBI:43474"/>
        <dbReference type="ChEBI" id="CHEBI:57930"/>
        <dbReference type="ChEBI" id="CHEBI:173114"/>
        <dbReference type="EC" id="2.7.7.56"/>
    </reaction>
</comment>
<comment type="subunit">
    <text evidence="1">Homohexameric ring arranged as a trimer of dimers.</text>
</comment>
<comment type="similarity">
    <text evidence="1">Belongs to the RNase PH family.</text>
</comment>
<sequence>MRIDGRKNEQIRHVKVTRHYTKYAEGSVYIEVGDTKVLCNVSIEDKVPPFMKGTGSGWITAEYNMLPRSTETRKIRDIARLKIDGRTMEIQRLIGRALRSVVDLKALGEKTLWIDCDVIQADGGTRTTAISGAFIALVDAVNKLHKIKPFKIYPIRSFVAAVSVGIVNEEKILDLCYQEDSKAKVDMNIIMTDEGSFVEVQGTGEESPYTRTELNELLDLGEKGIKQMINVQKESLKMDSLWIGTGGNN</sequence>
<accession>B2UZ31</accession>
<evidence type="ECO:0000255" key="1">
    <source>
        <dbReference type="HAMAP-Rule" id="MF_00564"/>
    </source>
</evidence>
<proteinExistence type="inferred from homology"/>
<protein>
    <recommendedName>
        <fullName evidence="1">Ribonuclease PH</fullName>
        <shortName evidence="1">RNase PH</shortName>
        <ecNumber evidence="1">2.7.7.56</ecNumber>
    </recommendedName>
    <alternativeName>
        <fullName evidence="1">tRNA nucleotidyltransferase</fullName>
    </alternativeName>
</protein>
<reference key="1">
    <citation type="submission" date="2008-05" db="EMBL/GenBank/DDBJ databases">
        <title>Complete genome sequence of Clostridium botulinum E3 str. Alaska E43.</title>
        <authorList>
            <person name="Brinkac L.M."/>
            <person name="Brown J.L."/>
            <person name="Bruce D."/>
            <person name="Detter C."/>
            <person name="Munk C."/>
            <person name="Smith L.A."/>
            <person name="Smith T.J."/>
            <person name="Sutton G."/>
            <person name="Brettin T.S."/>
        </authorList>
    </citation>
    <scope>NUCLEOTIDE SEQUENCE [LARGE SCALE GENOMIC DNA]</scope>
    <source>
        <strain>Alaska E43 / Type E3</strain>
    </source>
</reference>
<organism>
    <name type="scientific">Clostridium botulinum (strain Alaska E43 / Type E3)</name>
    <dbReference type="NCBI Taxonomy" id="508767"/>
    <lineage>
        <taxon>Bacteria</taxon>
        <taxon>Bacillati</taxon>
        <taxon>Bacillota</taxon>
        <taxon>Clostridia</taxon>
        <taxon>Eubacteriales</taxon>
        <taxon>Clostridiaceae</taxon>
        <taxon>Clostridium</taxon>
    </lineage>
</organism>
<feature type="chain" id="PRO_1000129332" description="Ribonuclease PH">
    <location>
        <begin position="1"/>
        <end position="249"/>
    </location>
</feature>
<feature type="binding site" evidence="1">
    <location>
        <position position="86"/>
    </location>
    <ligand>
        <name>phosphate</name>
        <dbReference type="ChEBI" id="CHEBI:43474"/>
        <note>substrate</note>
    </ligand>
</feature>
<feature type="binding site" evidence="1">
    <location>
        <begin position="124"/>
        <end position="126"/>
    </location>
    <ligand>
        <name>phosphate</name>
        <dbReference type="ChEBI" id="CHEBI:43474"/>
        <note>substrate</note>
    </ligand>
</feature>
<dbReference type="EC" id="2.7.7.56" evidence="1"/>
<dbReference type="EMBL" id="CP001078">
    <property type="protein sequence ID" value="ACD51613.1"/>
    <property type="molecule type" value="Genomic_DNA"/>
</dbReference>
<dbReference type="RefSeq" id="WP_003373848.1">
    <property type="nucleotide sequence ID" value="NC_010723.1"/>
</dbReference>
<dbReference type="SMR" id="B2UZ31"/>
<dbReference type="KEGG" id="cbt:CLH_0403"/>
<dbReference type="HOGENOM" id="CLU_050858_0_0_9"/>
<dbReference type="GO" id="GO:0000175">
    <property type="term" value="F:3'-5'-RNA exonuclease activity"/>
    <property type="evidence" value="ECO:0007669"/>
    <property type="project" value="UniProtKB-UniRule"/>
</dbReference>
<dbReference type="GO" id="GO:0000049">
    <property type="term" value="F:tRNA binding"/>
    <property type="evidence" value="ECO:0007669"/>
    <property type="project" value="UniProtKB-UniRule"/>
</dbReference>
<dbReference type="GO" id="GO:0009022">
    <property type="term" value="F:tRNA nucleotidyltransferase activity"/>
    <property type="evidence" value="ECO:0007669"/>
    <property type="project" value="UniProtKB-UniRule"/>
</dbReference>
<dbReference type="GO" id="GO:0016075">
    <property type="term" value="P:rRNA catabolic process"/>
    <property type="evidence" value="ECO:0007669"/>
    <property type="project" value="UniProtKB-UniRule"/>
</dbReference>
<dbReference type="GO" id="GO:0006364">
    <property type="term" value="P:rRNA processing"/>
    <property type="evidence" value="ECO:0007669"/>
    <property type="project" value="UniProtKB-KW"/>
</dbReference>
<dbReference type="GO" id="GO:0008033">
    <property type="term" value="P:tRNA processing"/>
    <property type="evidence" value="ECO:0007669"/>
    <property type="project" value="UniProtKB-UniRule"/>
</dbReference>
<dbReference type="CDD" id="cd11362">
    <property type="entry name" value="RNase_PH_bact"/>
    <property type="match status" value="1"/>
</dbReference>
<dbReference type="FunFam" id="3.30.230.70:FF:000003">
    <property type="entry name" value="Ribonuclease PH"/>
    <property type="match status" value="1"/>
</dbReference>
<dbReference type="Gene3D" id="3.30.230.70">
    <property type="entry name" value="GHMP Kinase, N-terminal domain"/>
    <property type="match status" value="1"/>
</dbReference>
<dbReference type="HAMAP" id="MF_00564">
    <property type="entry name" value="RNase_PH"/>
    <property type="match status" value="1"/>
</dbReference>
<dbReference type="InterPro" id="IPR001247">
    <property type="entry name" value="ExoRNase_PH_dom1"/>
</dbReference>
<dbReference type="InterPro" id="IPR015847">
    <property type="entry name" value="ExoRNase_PH_dom2"/>
</dbReference>
<dbReference type="InterPro" id="IPR036345">
    <property type="entry name" value="ExoRNase_PH_dom2_sf"/>
</dbReference>
<dbReference type="InterPro" id="IPR027408">
    <property type="entry name" value="PNPase/RNase_PH_dom_sf"/>
</dbReference>
<dbReference type="InterPro" id="IPR020568">
    <property type="entry name" value="Ribosomal_Su5_D2-typ_SF"/>
</dbReference>
<dbReference type="InterPro" id="IPR050080">
    <property type="entry name" value="RNase_PH"/>
</dbReference>
<dbReference type="InterPro" id="IPR002381">
    <property type="entry name" value="RNase_PH_bac-type"/>
</dbReference>
<dbReference type="InterPro" id="IPR018336">
    <property type="entry name" value="RNase_PH_CS"/>
</dbReference>
<dbReference type="NCBIfam" id="TIGR01966">
    <property type="entry name" value="RNasePH"/>
    <property type="match status" value="1"/>
</dbReference>
<dbReference type="PANTHER" id="PTHR11953">
    <property type="entry name" value="EXOSOME COMPLEX COMPONENT"/>
    <property type="match status" value="1"/>
</dbReference>
<dbReference type="PANTHER" id="PTHR11953:SF0">
    <property type="entry name" value="EXOSOME COMPLEX COMPONENT RRP41"/>
    <property type="match status" value="1"/>
</dbReference>
<dbReference type="Pfam" id="PF01138">
    <property type="entry name" value="RNase_PH"/>
    <property type="match status" value="1"/>
</dbReference>
<dbReference type="Pfam" id="PF03725">
    <property type="entry name" value="RNase_PH_C"/>
    <property type="match status" value="1"/>
</dbReference>
<dbReference type="SUPFAM" id="SSF55666">
    <property type="entry name" value="Ribonuclease PH domain 2-like"/>
    <property type="match status" value="1"/>
</dbReference>
<dbReference type="SUPFAM" id="SSF54211">
    <property type="entry name" value="Ribosomal protein S5 domain 2-like"/>
    <property type="match status" value="1"/>
</dbReference>
<dbReference type="PROSITE" id="PS01277">
    <property type="entry name" value="RIBONUCLEASE_PH"/>
    <property type="match status" value="1"/>
</dbReference>
<name>RNPH_CLOBA</name>